<accession>P62751</accession>
<accession>P29316</accession>
<accession>P39024</accession>
<accession>Q92774</accession>
<gene>
    <name type="primary">Rpl23a</name>
</gene>
<keyword id="KW-0002">3D-structure</keyword>
<keyword id="KW-0007">Acetylation</keyword>
<keyword id="KW-0164">Citrullination</keyword>
<keyword id="KW-0963">Cytoplasm</keyword>
<keyword id="KW-1017">Isopeptide bond</keyword>
<keyword id="KW-0488">Methylation</keyword>
<keyword id="KW-0539">Nucleus</keyword>
<keyword id="KW-0597">Phosphoprotein</keyword>
<keyword id="KW-1185">Reference proteome</keyword>
<keyword id="KW-0687">Ribonucleoprotein</keyword>
<keyword id="KW-0689">Ribosomal protein</keyword>
<keyword id="KW-0694">RNA-binding</keyword>
<keyword id="KW-0699">rRNA-binding</keyword>
<keyword id="KW-0832">Ubl conjugation</keyword>
<evidence type="ECO:0000250" key="1">
    <source>
        <dbReference type="UniProtKB" id="P62750"/>
    </source>
</evidence>
<evidence type="ECO:0000256" key="2">
    <source>
        <dbReference type="SAM" id="MobiDB-lite"/>
    </source>
</evidence>
<evidence type="ECO:0000269" key="3">
    <source>
    </source>
</evidence>
<evidence type="ECO:0000269" key="4">
    <source>
    </source>
</evidence>
<evidence type="ECO:0000269" key="5">
    <source>
    </source>
</evidence>
<evidence type="ECO:0000305" key="6"/>
<evidence type="ECO:0007744" key="7">
    <source>
        <dbReference type="PDB" id="7CPU"/>
    </source>
</evidence>
<evidence type="ECO:0007744" key="8">
    <source>
        <dbReference type="PDB" id="7CPV"/>
    </source>
</evidence>
<evidence type="ECO:0007744" key="9">
    <source>
    </source>
</evidence>
<dbReference type="EMBL" id="AF452721">
    <property type="protein sequence ID" value="AAQ04686.1"/>
    <property type="molecule type" value="mRNA"/>
</dbReference>
<dbReference type="EMBL" id="BC026656">
    <property type="protein sequence ID" value="AAH26656.1"/>
    <property type="molecule type" value="mRNA"/>
</dbReference>
<dbReference type="EMBL" id="BC029892">
    <property type="protein sequence ID" value="AAH29892.1"/>
    <property type="molecule type" value="mRNA"/>
</dbReference>
<dbReference type="CCDS" id="CCDS25093.1"/>
<dbReference type="RefSeq" id="NP_997406.1">
    <property type="nucleotide sequence ID" value="NM_207523.2"/>
</dbReference>
<dbReference type="PDB" id="6SWA">
    <property type="method" value="EM"/>
    <property type="resolution" value="3.10 A"/>
    <property type="chains" value="V=1-156"/>
</dbReference>
<dbReference type="PDB" id="7CPU">
    <property type="method" value="EM"/>
    <property type="resolution" value="2.82 A"/>
    <property type="chains" value="LX=1-156"/>
</dbReference>
<dbReference type="PDB" id="7CPV">
    <property type="method" value="EM"/>
    <property type="resolution" value="3.03 A"/>
    <property type="chains" value="LX=1-156"/>
</dbReference>
<dbReference type="PDB" id="7LS1">
    <property type="method" value="EM"/>
    <property type="resolution" value="3.30 A"/>
    <property type="chains" value="R2=1-156"/>
</dbReference>
<dbReference type="PDB" id="7LS2">
    <property type="method" value="EM"/>
    <property type="resolution" value="3.10 A"/>
    <property type="chains" value="R2=1-156"/>
</dbReference>
<dbReference type="PDBsum" id="6SWA"/>
<dbReference type="PDBsum" id="7CPU"/>
<dbReference type="PDBsum" id="7CPV"/>
<dbReference type="PDBsum" id="7LS1"/>
<dbReference type="PDBsum" id="7LS2"/>
<dbReference type="EMDB" id="EMD-10321"/>
<dbReference type="EMDB" id="EMD-23500"/>
<dbReference type="EMDB" id="EMD-23501"/>
<dbReference type="EMDB" id="EMD-30432"/>
<dbReference type="EMDB" id="EMD-30433"/>
<dbReference type="SMR" id="P62751"/>
<dbReference type="BioGRID" id="234500">
    <property type="interactions" value="83"/>
</dbReference>
<dbReference type="ComplexPortal" id="CPX-5262">
    <property type="entry name" value="60S cytosolic large ribosomal subunit"/>
</dbReference>
<dbReference type="ComplexPortal" id="CPX-7662">
    <property type="entry name" value="60S cytosolic large ribosomal subunit, testis-specific variant"/>
</dbReference>
<dbReference type="ComplexPortal" id="CPX-7663">
    <property type="entry name" value="60S cytosolic large ribosomal subunit, striated muscle variant"/>
</dbReference>
<dbReference type="DIP" id="DIP-59973N"/>
<dbReference type="FunCoup" id="P62751">
    <property type="interactions" value="1995"/>
</dbReference>
<dbReference type="IntAct" id="P62751">
    <property type="interactions" value="10"/>
</dbReference>
<dbReference type="MINT" id="P62751"/>
<dbReference type="STRING" id="10090.ENSMUSP00000099541"/>
<dbReference type="GlyGen" id="P62751">
    <property type="glycosylation" value="1 site, 1 O-linked glycan (1 site)"/>
</dbReference>
<dbReference type="iPTMnet" id="P62751"/>
<dbReference type="PhosphoSitePlus" id="P62751"/>
<dbReference type="SwissPalm" id="P62751"/>
<dbReference type="jPOST" id="P62751"/>
<dbReference type="PaxDb" id="10090-ENSMUSP00000099541"/>
<dbReference type="PeptideAtlas" id="P62751"/>
<dbReference type="ProteomicsDB" id="253249"/>
<dbReference type="Pumba" id="P62751"/>
<dbReference type="Ensembl" id="ENSMUST00000102483.5">
    <property type="protein sequence ID" value="ENSMUSP00000099541.5"/>
    <property type="gene ID" value="ENSMUSG00000058546.9"/>
</dbReference>
<dbReference type="GeneID" id="268449"/>
<dbReference type="KEGG" id="mmu:268449"/>
<dbReference type="UCSC" id="uc007kil.3">
    <property type="organism name" value="mouse"/>
</dbReference>
<dbReference type="AGR" id="MGI:3040672"/>
<dbReference type="CTD" id="6147"/>
<dbReference type="MGI" id="MGI:3040672">
    <property type="gene designation" value="Rpl23a"/>
</dbReference>
<dbReference type="VEuPathDB" id="HostDB:ENSMUSG00000058546"/>
<dbReference type="eggNOG" id="KOG1751">
    <property type="taxonomic scope" value="Eukaryota"/>
</dbReference>
<dbReference type="GeneTree" id="ENSGT00950000182901"/>
<dbReference type="HOGENOM" id="CLU_037562_0_2_1"/>
<dbReference type="InParanoid" id="P62751"/>
<dbReference type="OMA" id="RLDHHKV"/>
<dbReference type="OrthoDB" id="9620765at2759"/>
<dbReference type="PhylomeDB" id="P62751"/>
<dbReference type="TreeFam" id="TF314116"/>
<dbReference type="Reactome" id="R-MMU-156827">
    <property type="pathway name" value="L13a-mediated translational silencing of Ceruloplasmin expression"/>
</dbReference>
<dbReference type="Reactome" id="R-MMU-1799339">
    <property type="pathway name" value="SRP-dependent cotranslational protein targeting to membrane"/>
</dbReference>
<dbReference type="Reactome" id="R-MMU-6791226">
    <property type="pathway name" value="Major pathway of rRNA processing in the nucleolus and cytosol"/>
</dbReference>
<dbReference type="Reactome" id="R-MMU-72689">
    <property type="pathway name" value="Formation of a pool of free 40S subunits"/>
</dbReference>
<dbReference type="Reactome" id="R-MMU-72706">
    <property type="pathway name" value="GTP hydrolysis and joining of the 60S ribosomal subunit"/>
</dbReference>
<dbReference type="Reactome" id="R-MMU-975956">
    <property type="pathway name" value="Nonsense Mediated Decay (NMD) independent of the Exon Junction Complex (EJC)"/>
</dbReference>
<dbReference type="Reactome" id="R-MMU-975957">
    <property type="pathway name" value="Nonsense Mediated Decay (NMD) enhanced by the Exon Junction Complex (EJC)"/>
</dbReference>
<dbReference type="BioGRID-ORCS" id="268449">
    <property type="hits" value="28 hits in 67 CRISPR screens"/>
</dbReference>
<dbReference type="CD-CODE" id="CE726F99">
    <property type="entry name" value="Postsynaptic density"/>
</dbReference>
<dbReference type="CD-CODE" id="DE1E139C">
    <property type="entry name" value="Chromatoid body"/>
</dbReference>
<dbReference type="ChiTaRS" id="Rpl23a">
    <property type="organism name" value="mouse"/>
</dbReference>
<dbReference type="PRO" id="PR:P62751"/>
<dbReference type="Proteomes" id="UP000000589">
    <property type="component" value="Chromosome 11"/>
</dbReference>
<dbReference type="RNAct" id="P62751">
    <property type="molecule type" value="protein"/>
</dbReference>
<dbReference type="Bgee" id="ENSMUSG00000058546">
    <property type="expression patterns" value="Expressed in ectoplacental cone and 65 other cell types or tissues"/>
</dbReference>
<dbReference type="ExpressionAtlas" id="P62751">
    <property type="expression patterns" value="baseline and differential"/>
</dbReference>
<dbReference type="GO" id="GO:0005737">
    <property type="term" value="C:cytoplasm"/>
    <property type="evidence" value="ECO:0000314"/>
    <property type="project" value="ComplexPortal"/>
</dbReference>
<dbReference type="GO" id="GO:0005829">
    <property type="term" value="C:cytosol"/>
    <property type="evidence" value="ECO:0000304"/>
    <property type="project" value="Reactome"/>
</dbReference>
<dbReference type="GO" id="GO:0022625">
    <property type="term" value="C:cytosolic large ribosomal subunit"/>
    <property type="evidence" value="ECO:0000314"/>
    <property type="project" value="UniProtKB"/>
</dbReference>
<dbReference type="GO" id="GO:0005634">
    <property type="term" value="C:nucleus"/>
    <property type="evidence" value="ECO:0000250"/>
    <property type="project" value="UniProtKB"/>
</dbReference>
<dbReference type="GO" id="GO:0098794">
    <property type="term" value="C:postsynapse"/>
    <property type="evidence" value="ECO:0000303"/>
    <property type="project" value="SynGO"/>
</dbReference>
<dbReference type="GO" id="GO:0098793">
    <property type="term" value="C:presynapse"/>
    <property type="evidence" value="ECO:0000303"/>
    <property type="project" value="SynGO"/>
</dbReference>
<dbReference type="GO" id="GO:0005840">
    <property type="term" value="C:ribosome"/>
    <property type="evidence" value="ECO:0000303"/>
    <property type="project" value="SynGO"/>
</dbReference>
<dbReference type="GO" id="GO:0045202">
    <property type="term" value="C:synapse"/>
    <property type="evidence" value="ECO:0000314"/>
    <property type="project" value="SynGO"/>
</dbReference>
<dbReference type="GO" id="GO:0019843">
    <property type="term" value="F:rRNA binding"/>
    <property type="evidence" value="ECO:0007669"/>
    <property type="project" value="UniProtKB-KW"/>
</dbReference>
<dbReference type="GO" id="GO:0003735">
    <property type="term" value="F:structural constituent of ribosome"/>
    <property type="evidence" value="ECO:0000314"/>
    <property type="project" value="UniProtKB"/>
</dbReference>
<dbReference type="GO" id="GO:1904841">
    <property type="term" value="F:TORC2 complex binding"/>
    <property type="evidence" value="ECO:0000314"/>
    <property type="project" value="UniProtKB"/>
</dbReference>
<dbReference type="GO" id="GO:0002181">
    <property type="term" value="P:cytoplasmic translation"/>
    <property type="evidence" value="ECO:0000303"/>
    <property type="project" value="ComplexPortal"/>
</dbReference>
<dbReference type="GO" id="GO:0140242">
    <property type="term" value="P:translation at postsynapse"/>
    <property type="evidence" value="ECO:0000303"/>
    <property type="project" value="SynGO"/>
</dbReference>
<dbReference type="GO" id="GO:0140236">
    <property type="term" value="P:translation at presynapse"/>
    <property type="evidence" value="ECO:0000303"/>
    <property type="project" value="SynGO"/>
</dbReference>
<dbReference type="FunFam" id="3.30.70.330:FF:001015">
    <property type="entry name" value="Uncharacterized protein"/>
    <property type="match status" value="1"/>
</dbReference>
<dbReference type="Gene3D" id="3.30.70.330">
    <property type="match status" value="1"/>
</dbReference>
<dbReference type="HAMAP" id="MF_01369_A">
    <property type="entry name" value="Ribosomal_uL23_A"/>
    <property type="match status" value="1"/>
</dbReference>
<dbReference type="InterPro" id="IPR012677">
    <property type="entry name" value="Nucleotide-bd_a/b_plait_sf"/>
</dbReference>
<dbReference type="InterPro" id="IPR019985">
    <property type="entry name" value="Ribosomal_uL23"/>
</dbReference>
<dbReference type="InterPro" id="IPR013025">
    <property type="entry name" value="Ribosomal_uL23-like"/>
</dbReference>
<dbReference type="InterPro" id="IPR012678">
    <property type="entry name" value="Ribosomal_uL23/eL15/eS24_sf"/>
</dbReference>
<dbReference type="InterPro" id="IPR001014">
    <property type="entry name" value="Ribosomal_uL23_CS"/>
</dbReference>
<dbReference type="InterPro" id="IPR005633">
    <property type="entry name" value="Ribosomal_uL23_N"/>
</dbReference>
<dbReference type="NCBIfam" id="NF011118">
    <property type="entry name" value="PRK14548.1"/>
    <property type="match status" value="1"/>
</dbReference>
<dbReference type="NCBIfam" id="TIGR03636">
    <property type="entry name" value="uL23_arch"/>
    <property type="match status" value="1"/>
</dbReference>
<dbReference type="PANTHER" id="PTHR11620">
    <property type="entry name" value="60S RIBOSOMAL PROTEIN L23A"/>
    <property type="match status" value="1"/>
</dbReference>
<dbReference type="Pfam" id="PF00276">
    <property type="entry name" value="Ribosomal_L23"/>
    <property type="match status" value="1"/>
</dbReference>
<dbReference type="Pfam" id="PF03939">
    <property type="entry name" value="Ribosomal_L23eN"/>
    <property type="match status" value="1"/>
</dbReference>
<dbReference type="SUPFAM" id="SSF54189">
    <property type="entry name" value="Ribosomal proteins S24e, L23 and L15e"/>
    <property type="match status" value="1"/>
</dbReference>
<dbReference type="PROSITE" id="PS00050">
    <property type="entry name" value="RIBOSOMAL_L23"/>
    <property type="match status" value="1"/>
</dbReference>
<reference key="1">
    <citation type="submission" date="2001-11" db="EMBL/GenBank/DDBJ databases">
        <title>cDNA cloning, genomic structure, and chromosomal localization of a novel murine ribosomal protein L23a gene.</title>
        <authorList>
            <person name="Fan Y."/>
            <person name="Friedman C."/>
            <person name="Trask B.J."/>
        </authorList>
    </citation>
    <scope>NUCLEOTIDE SEQUENCE [MRNA]</scope>
    <source>
        <tissue>Liver</tissue>
    </source>
</reference>
<reference key="2">
    <citation type="journal article" date="2004" name="Genome Res.">
        <title>The status, quality, and expansion of the NIH full-length cDNA project: the Mammalian Gene Collection (MGC).</title>
        <authorList>
            <consortium name="The MGC Project Team"/>
        </authorList>
    </citation>
    <scope>NUCLEOTIDE SEQUENCE [LARGE SCALE MRNA]</scope>
    <source>
        <strain>FVB/N</strain>
        <tissue>Colon</tissue>
        <tissue>Liver</tissue>
    </source>
</reference>
<reference key="3">
    <citation type="journal article" date="2010" name="Cell">
        <title>A tissue-specific atlas of mouse protein phosphorylation and expression.</title>
        <authorList>
            <person name="Huttlin E.L."/>
            <person name="Jedrychowski M.P."/>
            <person name="Elias J.E."/>
            <person name="Goswami T."/>
            <person name="Rad R."/>
            <person name="Beausoleil S.A."/>
            <person name="Villen J."/>
            <person name="Haas W."/>
            <person name="Sowa M.E."/>
            <person name="Gygi S.P."/>
        </authorList>
    </citation>
    <scope>IDENTIFICATION BY MASS SPECTROMETRY [LARGE SCALE ANALYSIS]</scope>
    <source>
        <tissue>Brain</tissue>
        <tissue>Brown adipose tissue</tissue>
        <tissue>Heart</tissue>
        <tissue>Kidney</tissue>
        <tissue>Liver</tissue>
        <tissue>Lung</tissue>
        <tissue>Pancreas</tissue>
        <tissue>Spleen</tissue>
        <tissue>Testis</tissue>
    </source>
</reference>
<reference key="4">
    <citation type="journal article" date="2010" name="Nature">
        <title>NRMT is an alpha-N-methyltransferase that methylates RCC1 and retinoblastoma protein.</title>
        <authorList>
            <person name="Tooley C.E."/>
            <person name="Petkowski J.J."/>
            <person name="Muratore-Schroeder T.L."/>
            <person name="Balsbaugh J.L."/>
            <person name="Shabanowitz J."/>
            <person name="Sabat M."/>
            <person name="Minor W."/>
            <person name="Hunt D.F."/>
            <person name="Macara I.G."/>
        </authorList>
    </citation>
    <scope>CLEAVAGE OF INITIATOR METHIONINE</scope>
    <scope>METHYLATION AT ALA-2</scope>
</reference>
<reference key="5">
    <citation type="journal article" date="2013" name="Mol. Cell">
        <title>SIRT5-mediated lysine desuccinylation impacts diverse metabolic pathways.</title>
        <authorList>
            <person name="Park J."/>
            <person name="Chen Y."/>
            <person name="Tishkoff D.X."/>
            <person name="Peng C."/>
            <person name="Tan M."/>
            <person name="Dai L."/>
            <person name="Xie Z."/>
            <person name="Zhang Y."/>
            <person name="Zwaans B.M."/>
            <person name="Skinner M.E."/>
            <person name="Lombard D.B."/>
            <person name="Zhao Y."/>
        </authorList>
    </citation>
    <scope>ACETYLATION [LARGE SCALE ANALYSIS] AT LYS-70</scope>
    <scope>IDENTIFICATION BY MASS SPECTROMETRY [LARGE SCALE ANALYSIS]</scope>
    <source>
        <tissue>Embryonic fibroblast</tissue>
    </source>
</reference>
<reference key="6">
    <citation type="journal article" date="2014" name="Nature">
        <title>Citrullination regulates pluripotency and histone H1 binding to chromatin.</title>
        <authorList>
            <person name="Christophorou M.A."/>
            <person name="Castelo-Branco G."/>
            <person name="Halley-Stott R.P."/>
            <person name="Oliveira C.S."/>
            <person name="Loos R."/>
            <person name="Radzisheuskaya A."/>
            <person name="Mowen K.A."/>
            <person name="Bertone P."/>
            <person name="Silva J.C."/>
            <person name="Zernicka-Goetz M."/>
            <person name="Nielsen M.L."/>
            <person name="Gurdon J.B."/>
            <person name="Kouzarides T."/>
        </authorList>
    </citation>
    <scope>CITRULLINATION AT ARG-41</scope>
</reference>
<reference evidence="7 8" key="7">
    <citation type="journal article" date="2022" name="Nature">
        <title>A male germ-cell-specific ribosome controls male fertility.</title>
        <authorList>
            <person name="Li H."/>
            <person name="Huo Y."/>
            <person name="He X."/>
            <person name="Yao L."/>
            <person name="Zhang H."/>
            <person name="Cui Y."/>
            <person name="Xiao H."/>
            <person name="Xie W."/>
            <person name="Zhang D."/>
            <person name="Wang Y."/>
            <person name="Zhang S."/>
            <person name="Tu H."/>
            <person name="Cheng Y."/>
            <person name="Guo Y."/>
            <person name="Cao X."/>
            <person name="Zhu Y."/>
            <person name="Jiang T."/>
            <person name="Guo X."/>
            <person name="Qin Y."/>
            <person name="Sha J."/>
        </authorList>
    </citation>
    <scope>STRUCTURE BY ELECTRON MICROSCOPY (3.03 ANGSTROMS) OF RIBOSOME</scope>
    <scope>FUNCTION</scope>
    <scope>SUBUNIT</scope>
    <scope>SUBCELLULAR LOCATION</scope>
</reference>
<proteinExistence type="evidence at protein level"/>
<name>RL23A_MOUSE</name>
<organism>
    <name type="scientific">Mus musculus</name>
    <name type="common">Mouse</name>
    <dbReference type="NCBI Taxonomy" id="10090"/>
    <lineage>
        <taxon>Eukaryota</taxon>
        <taxon>Metazoa</taxon>
        <taxon>Chordata</taxon>
        <taxon>Craniata</taxon>
        <taxon>Vertebrata</taxon>
        <taxon>Euteleostomi</taxon>
        <taxon>Mammalia</taxon>
        <taxon>Eutheria</taxon>
        <taxon>Euarchontoglires</taxon>
        <taxon>Glires</taxon>
        <taxon>Rodentia</taxon>
        <taxon>Myomorpha</taxon>
        <taxon>Muroidea</taxon>
        <taxon>Muridae</taxon>
        <taxon>Murinae</taxon>
        <taxon>Mus</taxon>
        <taxon>Mus</taxon>
    </lineage>
</organism>
<sequence length="156" mass="17695">MAPKAKKEAPAPPKAEAKAKALKAKKAVLKGVHSHKKKKIRTSPTFRRPKTLRLRRQPKYPRKSAPRRNKLDHYAIIKFPLTTESAMKKIEDNNTLVFIVDVKANKHQIKQAVKKLYDIDVAKVNTLIRPDGEKKAYVRLAPDYDALDVANKIGII</sequence>
<comment type="function">
    <text evidence="1 5">Component of the large ribosomal subunit (PubMed:36517592). The ribosome is a large ribonucleoprotein complex responsible for the synthesis of proteins in the cell (PubMed:36517592). Binds a specific region on the 26S rRNA (By similarity). May promote p53/TP53 degradation possibly through the stimulation of MDM2-mediated TP53 polyubiquitination (By similarity).</text>
</comment>
<comment type="subunit">
    <text evidence="1 5">Component of the large ribosomal subunit (PubMed:36517592). Interacts with LYAR and GNL2 (By similarity). Interacts with MDM2; this interaction may promote MDM2-mediated p53/TP53 polyubiquitination (By similarity). Directly interacts (via BIB domain) with IPO5, IPO7, KPNB1 and TNPO1; these interactions are involved in RPL23A nuclear import for the assembly of ribosomal subunits (By similarity). Interacts with IPO8 (By similarity).</text>
</comment>
<comment type="subcellular location">
    <subcellularLocation>
        <location evidence="5">Cytoplasm</location>
    </subcellularLocation>
    <subcellularLocation>
        <location evidence="1">Nucleus</location>
    </subcellularLocation>
    <text evidence="1">Although RPL23A is functional within the cytoplasm, the assembly of ribosomal subunits occurs in the nucleus. RPL23A nuclear import is mediated by IPO5/RanBP5, IPO7/RanBP7, KPNB1/importin-beta or TPNO1/Trn.</text>
</comment>
<comment type="domain">
    <text evidence="1">The N-terminal beta-like import receptor binding (BIB) domain mediates interaction with IPO5, IPO7, KPNB1 and TNPO1.</text>
</comment>
<comment type="PTM">
    <text evidence="3">N-terminus is methylated by METTL11A/NTM1.</text>
</comment>
<comment type="PTM">
    <text evidence="4">Citrullinated by PADI4.</text>
</comment>
<comment type="similarity">
    <text evidence="6">Belongs to the universal ribosomal protein uL23 family.</text>
</comment>
<protein>
    <recommendedName>
        <fullName evidence="6">Large ribosomal subunit protein uL23</fullName>
    </recommendedName>
    <alternativeName>
        <fullName>60S ribosomal protein L23a</fullName>
    </alternativeName>
</protein>
<feature type="initiator methionine" description="Removed" evidence="3">
    <location>
        <position position="1"/>
    </location>
</feature>
<feature type="chain" id="PRO_0000129468" description="Large ribosomal subunit protein uL23">
    <location>
        <begin position="2"/>
        <end position="156"/>
    </location>
</feature>
<feature type="region of interest" description="Disordered" evidence="2">
    <location>
        <begin position="1"/>
        <end position="67"/>
    </location>
</feature>
<feature type="region of interest" description="Beta-like import receptor binding (BIB) domain" evidence="1">
    <location>
        <begin position="32"/>
        <end position="74"/>
    </location>
</feature>
<feature type="compositionally biased region" description="Basic and acidic residues" evidence="2">
    <location>
        <begin position="1"/>
        <end position="19"/>
    </location>
</feature>
<feature type="compositionally biased region" description="Basic residues" evidence="2">
    <location>
        <begin position="20"/>
        <end position="67"/>
    </location>
</feature>
<feature type="modified residue" description="N,N,N-trimethylalanine; by NTM1" evidence="3">
    <location>
        <position position="2"/>
    </location>
</feature>
<feature type="modified residue" description="Citrulline" evidence="4">
    <location>
        <position position="41"/>
    </location>
</feature>
<feature type="modified residue" description="Phosphoserine" evidence="1">
    <location>
        <position position="43"/>
    </location>
</feature>
<feature type="modified residue" description="Phosphothreonine" evidence="1">
    <location>
        <position position="45"/>
    </location>
</feature>
<feature type="modified residue" description="N6-acetyllysine" evidence="9">
    <location>
        <position position="70"/>
    </location>
</feature>
<feature type="cross-link" description="Glycyl lysine isopeptide (Lys-Gly) (interchain with G-Cter in SUMO2)" evidence="1">
    <location>
        <position position="14"/>
    </location>
</feature>